<accession>P62358</accession>
<protein>
    <recommendedName>
        <fullName evidence="1">ATP phosphoribosyltransferase regulatory subunit</fullName>
    </recommendedName>
</protein>
<feature type="chain" id="PRO_0000171023" description="ATP phosphoribosyltransferase regulatory subunit">
    <location>
        <begin position="1"/>
        <end position="420"/>
    </location>
</feature>
<organism>
    <name type="scientific">Bacillus cereus (strain ATCC 10987 / NRS 248)</name>
    <dbReference type="NCBI Taxonomy" id="222523"/>
    <lineage>
        <taxon>Bacteria</taxon>
        <taxon>Bacillati</taxon>
        <taxon>Bacillota</taxon>
        <taxon>Bacilli</taxon>
        <taxon>Bacillales</taxon>
        <taxon>Bacillaceae</taxon>
        <taxon>Bacillus</taxon>
        <taxon>Bacillus cereus group</taxon>
    </lineage>
</organism>
<comment type="function">
    <text evidence="1">Required for the first step of histidine biosynthesis. May allow the feedback regulation of ATP phosphoribosyltransferase activity by histidine.</text>
</comment>
<comment type="pathway">
    <text evidence="1">Amino-acid biosynthesis; L-histidine biosynthesis; L-histidine from 5-phospho-alpha-D-ribose 1-diphosphate: step 1/9.</text>
</comment>
<comment type="subunit">
    <text evidence="1">Heteromultimer composed of HisG and HisZ subunits.</text>
</comment>
<comment type="subcellular location">
    <subcellularLocation>
        <location evidence="1">Cytoplasm</location>
    </subcellularLocation>
</comment>
<comment type="miscellaneous">
    <text>This function is generally fulfilled by the C-terminal part of HisG, which is missing in some bacteria such as this one.</text>
</comment>
<comment type="similarity">
    <text evidence="1">Belongs to the class-II aminoacyl-tRNA synthetase family. HisZ subfamily.</text>
</comment>
<name>HISZ_BACC1</name>
<evidence type="ECO:0000255" key="1">
    <source>
        <dbReference type="HAMAP-Rule" id="MF_00125"/>
    </source>
</evidence>
<proteinExistence type="inferred from homology"/>
<keyword id="KW-0028">Amino-acid biosynthesis</keyword>
<keyword id="KW-0963">Cytoplasm</keyword>
<keyword id="KW-0368">Histidine biosynthesis</keyword>
<sequence>MTKWKRANPNGTRDYLFEECTLIEEVEQKLRRTFLERGYEEIRTPTIEFYDVFAFQSRPIDEEKMYKFFDEKGRIIVLRPDMTIPLARVIGTQRCDTPLKVTYSGNVFRANESLTGKYNEIVQSGIEIIGIDNVRAEIECVISVIQSLQKLKVQSFTIEIGQVQLYKCIVKKLSIHEEEEKVLRTYIESKNYAALSNFIREKNFDRCDETVRLLEKLPRLFGNLEVIEEAEKLASSNEMKMAIARVKEIYEAIDKLGYGSYISIDLGMIQHLDYYTGVIFKGYIYEIGEEIVSGGRYDELIGNFGEMLPAVGLAVQVNQIVKALQEQQEPYERKRIDIMIHYELNRLAEAERLRNLLQKDGKKVEISLCSNLNDTFQFARKNQIVTVVEAKNESLVEYVWNEKWVVQKEGETSCVTFKLR</sequence>
<dbReference type="EMBL" id="AE017194">
    <property type="protein sequence ID" value="AAS40453.1"/>
    <property type="molecule type" value="Genomic_DNA"/>
</dbReference>
<dbReference type="SMR" id="P62358"/>
<dbReference type="KEGG" id="bca:BCE_1524"/>
<dbReference type="HOGENOM" id="CLU_025113_0_0_9"/>
<dbReference type="UniPathway" id="UPA00031">
    <property type="reaction ID" value="UER00006"/>
</dbReference>
<dbReference type="Proteomes" id="UP000002527">
    <property type="component" value="Chromosome"/>
</dbReference>
<dbReference type="GO" id="GO:0005737">
    <property type="term" value="C:cytoplasm"/>
    <property type="evidence" value="ECO:0007669"/>
    <property type="project" value="UniProtKB-SubCell"/>
</dbReference>
<dbReference type="GO" id="GO:0140096">
    <property type="term" value="F:catalytic activity, acting on a protein"/>
    <property type="evidence" value="ECO:0007669"/>
    <property type="project" value="UniProtKB-ARBA"/>
</dbReference>
<dbReference type="GO" id="GO:0004821">
    <property type="term" value="F:histidine-tRNA ligase activity"/>
    <property type="evidence" value="ECO:0007669"/>
    <property type="project" value="TreeGrafter"/>
</dbReference>
<dbReference type="GO" id="GO:0016740">
    <property type="term" value="F:transferase activity"/>
    <property type="evidence" value="ECO:0007669"/>
    <property type="project" value="UniProtKB-ARBA"/>
</dbReference>
<dbReference type="GO" id="GO:0006427">
    <property type="term" value="P:histidyl-tRNA aminoacylation"/>
    <property type="evidence" value="ECO:0007669"/>
    <property type="project" value="TreeGrafter"/>
</dbReference>
<dbReference type="GO" id="GO:0000105">
    <property type="term" value="P:L-histidine biosynthetic process"/>
    <property type="evidence" value="ECO:0007669"/>
    <property type="project" value="UniProtKB-UniRule"/>
</dbReference>
<dbReference type="CDD" id="cd00773">
    <property type="entry name" value="HisRS-like_core"/>
    <property type="match status" value="1"/>
</dbReference>
<dbReference type="FunFam" id="3.30.930.10:FF:000060">
    <property type="entry name" value="ATP phosphoribosyltransferase regulatory subunit"/>
    <property type="match status" value="1"/>
</dbReference>
<dbReference type="Gene3D" id="3.30.930.10">
    <property type="entry name" value="Bira Bifunctional Protein, Domain 2"/>
    <property type="match status" value="1"/>
</dbReference>
<dbReference type="HAMAP" id="MF_00125">
    <property type="entry name" value="HisZ"/>
    <property type="match status" value="1"/>
</dbReference>
<dbReference type="InterPro" id="IPR006195">
    <property type="entry name" value="aa-tRNA-synth_II"/>
</dbReference>
<dbReference type="InterPro" id="IPR045864">
    <property type="entry name" value="aa-tRNA-synth_II/BPL/LPL"/>
</dbReference>
<dbReference type="InterPro" id="IPR041715">
    <property type="entry name" value="HisRS-like_core"/>
</dbReference>
<dbReference type="InterPro" id="IPR004516">
    <property type="entry name" value="HisRS/HisZ"/>
</dbReference>
<dbReference type="InterPro" id="IPR004517">
    <property type="entry name" value="HisZ"/>
</dbReference>
<dbReference type="NCBIfam" id="TIGR00443">
    <property type="entry name" value="hisZ_biosyn_reg"/>
    <property type="match status" value="1"/>
</dbReference>
<dbReference type="NCBIfam" id="NF008938">
    <property type="entry name" value="PRK12292.1-6"/>
    <property type="match status" value="1"/>
</dbReference>
<dbReference type="PANTHER" id="PTHR43707:SF6">
    <property type="entry name" value="ATP PHOSPHORIBOSYLTRANSFERASE REGULATORY SUBUNIT"/>
    <property type="match status" value="1"/>
</dbReference>
<dbReference type="PANTHER" id="PTHR43707">
    <property type="entry name" value="HISTIDYL-TRNA SYNTHETASE"/>
    <property type="match status" value="1"/>
</dbReference>
<dbReference type="Pfam" id="PF13393">
    <property type="entry name" value="tRNA-synt_His"/>
    <property type="match status" value="1"/>
</dbReference>
<dbReference type="PIRSF" id="PIRSF001549">
    <property type="entry name" value="His-tRNA_synth"/>
    <property type="match status" value="1"/>
</dbReference>
<dbReference type="SUPFAM" id="SSF55681">
    <property type="entry name" value="Class II aaRS and biotin synthetases"/>
    <property type="match status" value="1"/>
</dbReference>
<dbReference type="PROSITE" id="PS50862">
    <property type="entry name" value="AA_TRNA_LIGASE_II"/>
    <property type="match status" value="1"/>
</dbReference>
<reference key="1">
    <citation type="journal article" date="2004" name="Nucleic Acids Res.">
        <title>The genome sequence of Bacillus cereus ATCC 10987 reveals metabolic adaptations and a large plasmid related to Bacillus anthracis pXO1.</title>
        <authorList>
            <person name="Rasko D.A."/>
            <person name="Ravel J."/>
            <person name="Oekstad O.A."/>
            <person name="Helgason E."/>
            <person name="Cer R.Z."/>
            <person name="Jiang L."/>
            <person name="Shores K.A."/>
            <person name="Fouts D.E."/>
            <person name="Tourasse N.J."/>
            <person name="Angiuoli S.V."/>
            <person name="Kolonay J.F."/>
            <person name="Nelson W.C."/>
            <person name="Kolstoe A.-B."/>
            <person name="Fraser C.M."/>
            <person name="Read T.D."/>
        </authorList>
    </citation>
    <scope>NUCLEOTIDE SEQUENCE [LARGE SCALE GENOMIC DNA]</scope>
    <source>
        <strain>ATCC 10987 / NRS 248</strain>
    </source>
</reference>
<gene>
    <name evidence="1" type="primary">hisZ</name>
    <name type="ordered locus">BCE_1524</name>
</gene>